<comment type="function">
    <text evidence="1">Involved in pyrimidine catabolism. May facilitate the hydrolysis of carbamate, a reaction that can also occur spontaneously.</text>
</comment>
<comment type="catalytic activity">
    <reaction evidence="1">
        <text>carbamate + 2 H(+) = NH4(+) + CO2</text>
        <dbReference type="Rhea" id="RHEA:15649"/>
        <dbReference type="ChEBI" id="CHEBI:13941"/>
        <dbReference type="ChEBI" id="CHEBI:15378"/>
        <dbReference type="ChEBI" id="CHEBI:16526"/>
        <dbReference type="ChEBI" id="CHEBI:28938"/>
    </reaction>
</comment>
<comment type="similarity">
    <text evidence="1">Belongs to the AB hydrolase superfamily. Hydrolase RutD family.</text>
</comment>
<organism>
    <name type="scientific">Escherichia coli O157:H7 (strain EC4115 / EHEC)</name>
    <dbReference type="NCBI Taxonomy" id="444450"/>
    <lineage>
        <taxon>Bacteria</taxon>
        <taxon>Pseudomonadati</taxon>
        <taxon>Pseudomonadota</taxon>
        <taxon>Gammaproteobacteria</taxon>
        <taxon>Enterobacterales</taxon>
        <taxon>Enterobacteriaceae</taxon>
        <taxon>Escherichia</taxon>
    </lineage>
</organism>
<name>RUTD_ECO5E</name>
<evidence type="ECO:0000255" key="1">
    <source>
        <dbReference type="HAMAP-Rule" id="MF_00832"/>
    </source>
</evidence>
<sequence length="266" mass="28949">MKLSLSPPPYADAPVVVLISGLGGSGSYWLPQLAVLEQEYQVVCYDQRGTGNNPDTLAEDYSITQMAAELHQALVAAGIEHYAVVGHALGALVGMQLALDHPASVTVLVCVNGWLRINAHTRRCFQVRERLLYSGGAQAWVEAQPLFLYPADWMAARAPRLEAEDALALAHFQGKNNLLRRLNALKRADFSHHADRIRCPVQIICASDDLLVPSACSSELHAALPDSQKMVMRYGGHACNVTDPETFNALLLNGLASLLHHREAAL</sequence>
<protein>
    <recommendedName>
        <fullName evidence="1">Putative carbamate hydrolase RutD</fullName>
        <ecNumber evidence="1">3.5.1.-</ecNumber>
    </recommendedName>
    <alternativeName>
        <fullName evidence="1">Aminohydrolase</fullName>
    </alternativeName>
</protein>
<dbReference type="EC" id="3.5.1.-" evidence="1"/>
<dbReference type="EMBL" id="CP001164">
    <property type="protein sequence ID" value="ACI36502.1"/>
    <property type="molecule type" value="Genomic_DNA"/>
</dbReference>
<dbReference type="RefSeq" id="WP_001301780.1">
    <property type="nucleotide sequence ID" value="NC_011353.1"/>
</dbReference>
<dbReference type="SMR" id="B5YU51"/>
<dbReference type="ESTHER" id="ecoli-rutD">
    <property type="family name" value="RutD"/>
</dbReference>
<dbReference type="KEGG" id="ecf:ECH74115_1246"/>
<dbReference type="HOGENOM" id="CLU_020336_50_1_6"/>
<dbReference type="GO" id="GO:0016811">
    <property type="term" value="F:hydrolase activity, acting on carbon-nitrogen (but not peptide) bonds, in linear amides"/>
    <property type="evidence" value="ECO:0007669"/>
    <property type="project" value="InterPro"/>
</dbReference>
<dbReference type="GO" id="GO:0019740">
    <property type="term" value="P:nitrogen utilization"/>
    <property type="evidence" value="ECO:0007669"/>
    <property type="project" value="UniProtKB-UniRule"/>
</dbReference>
<dbReference type="GO" id="GO:0006212">
    <property type="term" value="P:uracil catabolic process"/>
    <property type="evidence" value="ECO:0007669"/>
    <property type="project" value="UniProtKB-UniRule"/>
</dbReference>
<dbReference type="FunFam" id="3.40.50.1820:FF:000052">
    <property type="entry name" value="Putative aminoacrylate hydrolase RutD"/>
    <property type="match status" value="1"/>
</dbReference>
<dbReference type="Gene3D" id="3.40.50.1820">
    <property type="entry name" value="alpha/beta hydrolase"/>
    <property type="match status" value="1"/>
</dbReference>
<dbReference type="HAMAP" id="MF_00832">
    <property type="entry name" value="RutD"/>
    <property type="match status" value="1"/>
</dbReference>
<dbReference type="InterPro" id="IPR000073">
    <property type="entry name" value="AB_hydrolase_1"/>
</dbReference>
<dbReference type="InterPro" id="IPR029058">
    <property type="entry name" value="AB_hydrolase_fold"/>
</dbReference>
<dbReference type="InterPro" id="IPR050266">
    <property type="entry name" value="AB_hydrolase_sf"/>
</dbReference>
<dbReference type="InterPro" id="IPR019913">
    <property type="entry name" value="Pyrimidine_utilisation_RutD"/>
</dbReference>
<dbReference type="NCBIfam" id="TIGR03611">
    <property type="entry name" value="RutD"/>
    <property type="match status" value="1"/>
</dbReference>
<dbReference type="PANTHER" id="PTHR43798">
    <property type="entry name" value="MONOACYLGLYCEROL LIPASE"/>
    <property type="match status" value="1"/>
</dbReference>
<dbReference type="Pfam" id="PF00561">
    <property type="entry name" value="Abhydrolase_1"/>
    <property type="match status" value="1"/>
</dbReference>
<dbReference type="SUPFAM" id="SSF53474">
    <property type="entry name" value="alpha/beta-Hydrolases"/>
    <property type="match status" value="1"/>
</dbReference>
<feature type="chain" id="PRO_0000402952" description="Putative carbamate hydrolase RutD">
    <location>
        <begin position="1"/>
        <end position="266"/>
    </location>
</feature>
<proteinExistence type="inferred from homology"/>
<keyword id="KW-0378">Hydrolase</keyword>
<accession>B5YU51</accession>
<gene>
    <name evidence="1" type="primary">rutD</name>
    <name type="ordered locus">ECH74115_1246</name>
</gene>
<reference key="1">
    <citation type="journal article" date="2011" name="Proc. Natl. Acad. Sci. U.S.A.">
        <title>Genomic anatomy of Escherichia coli O157:H7 outbreaks.</title>
        <authorList>
            <person name="Eppinger M."/>
            <person name="Mammel M.K."/>
            <person name="Leclerc J.E."/>
            <person name="Ravel J."/>
            <person name="Cebula T.A."/>
        </authorList>
    </citation>
    <scope>NUCLEOTIDE SEQUENCE [LARGE SCALE GENOMIC DNA]</scope>
    <source>
        <strain>EC4115 / EHEC</strain>
    </source>
</reference>